<proteinExistence type="inferred from homology"/>
<dbReference type="EC" id="1.4.3.16" evidence="1"/>
<dbReference type="EMBL" id="AE000516">
    <property type="protein sequence ID" value="AAK45899.1"/>
    <property type="molecule type" value="Genomic_DNA"/>
</dbReference>
<dbReference type="PIR" id="E70543">
    <property type="entry name" value="E70543"/>
</dbReference>
<dbReference type="RefSeq" id="WP_003901204.1">
    <property type="nucleotide sequence ID" value="NZ_KK341227.1"/>
</dbReference>
<dbReference type="SMR" id="P9WJJ8"/>
<dbReference type="KEGG" id="mtc:MT1631"/>
<dbReference type="PATRIC" id="fig|83331.31.peg.1753"/>
<dbReference type="HOGENOM" id="CLU_014312_3_2_11"/>
<dbReference type="UniPathway" id="UPA00253">
    <property type="reaction ID" value="UER00326"/>
</dbReference>
<dbReference type="Proteomes" id="UP000001020">
    <property type="component" value="Chromosome"/>
</dbReference>
<dbReference type="GO" id="GO:0005737">
    <property type="term" value="C:cytoplasm"/>
    <property type="evidence" value="ECO:0007669"/>
    <property type="project" value="UniProtKB-SubCell"/>
</dbReference>
<dbReference type="GO" id="GO:0008734">
    <property type="term" value="F:L-aspartate oxidase activity"/>
    <property type="evidence" value="ECO:0007669"/>
    <property type="project" value="UniProtKB-EC"/>
</dbReference>
<dbReference type="GO" id="GO:0000166">
    <property type="term" value="F:nucleotide binding"/>
    <property type="evidence" value="ECO:0007669"/>
    <property type="project" value="UniProtKB-KW"/>
</dbReference>
<dbReference type="GO" id="GO:0033765">
    <property type="term" value="F:steroid dehydrogenase activity, acting on the CH-CH group of donors"/>
    <property type="evidence" value="ECO:0007669"/>
    <property type="project" value="UniProtKB-ARBA"/>
</dbReference>
<dbReference type="GO" id="GO:0034628">
    <property type="term" value="P:'de novo' NAD biosynthetic process from L-aspartate"/>
    <property type="evidence" value="ECO:0007669"/>
    <property type="project" value="TreeGrafter"/>
</dbReference>
<dbReference type="FunFam" id="3.90.700.10:FF:000002">
    <property type="entry name" value="L-aspartate oxidase"/>
    <property type="match status" value="1"/>
</dbReference>
<dbReference type="Gene3D" id="3.50.50.60">
    <property type="entry name" value="FAD/NAD(P)-binding domain"/>
    <property type="match status" value="1"/>
</dbReference>
<dbReference type="Gene3D" id="1.20.58.100">
    <property type="entry name" value="Fumarate reductase/succinate dehydrogenase flavoprotein-like, C-terminal domain"/>
    <property type="match status" value="1"/>
</dbReference>
<dbReference type="Gene3D" id="3.90.700.10">
    <property type="entry name" value="Succinate dehydrogenase/fumarate reductase flavoprotein, catalytic domain"/>
    <property type="match status" value="1"/>
</dbReference>
<dbReference type="InterPro" id="IPR003953">
    <property type="entry name" value="FAD-dep_OxRdtase_2_FAD-bd"/>
</dbReference>
<dbReference type="InterPro" id="IPR036188">
    <property type="entry name" value="FAD/NAD-bd_sf"/>
</dbReference>
<dbReference type="InterPro" id="IPR037099">
    <property type="entry name" value="Fum_R/Succ_DH_flav-like_C_sf"/>
</dbReference>
<dbReference type="InterPro" id="IPR015939">
    <property type="entry name" value="Fum_Rdtase/Succ_DH_flav-like_C"/>
</dbReference>
<dbReference type="InterPro" id="IPR005288">
    <property type="entry name" value="NadB"/>
</dbReference>
<dbReference type="InterPro" id="IPR027477">
    <property type="entry name" value="Succ_DH/fumarate_Rdtase_cat_sf"/>
</dbReference>
<dbReference type="NCBIfam" id="TIGR00551">
    <property type="entry name" value="nadB"/>
    <property type="match status" value="1"/>
</dbReference>
<dbReference type="NCBIfam" id="NF005867">
    <property type="entry name" value="PRK07804.1"/>
    <property type="match status" value="1"/>
</dbReference>
<dbReference type="PANTHER" id="PTHR42716">
    <property type="entry name" value="L-ASPARTATE OXIDASE"/>
    <property type="match status" value="1"/>
</dbReference>
<dbReference type="PANTHER" id="PTHR42716:SF2">
    <property type="entry name" value="L-ASPARTATE OXIDASE, CHLOROPLASTIC"/>
    <property type="match status" value="1"/>
</dbReference>
<dbReference type="Pfam" id="PF00890">
    <property type="entry name" value="FAD_binding_2"/>
    <property type="match status" value="1"/>
</dbReference>
<dbReference type="Pfam" id="PF02910">
    <property type="entry name" value="Succ_DH_flav_C"/>
    <property type="match status" value="1"/>
</dbReference>
<dbReference type="PRINTS" id="PR00368">
    <property type="entry name" value="FADPNR"/>
</dbReference>
<dbReference type="PRINTS" id="PR00411">
    <property type="entry name" value="PNDRDTASEI"/>
</dbReference>
<dbReference type="SUPFAM" id="SSF51905">
    <property type="entry name" value="FAD/NAD(P)-binding domain"/>
    <property type="match status" value="1"/>
</dbReference>
<dbReference type="SUPFAM" id="SSF46977">
    <property type="entry name" value="Succinate dehydrogenase/fumarate reductase flavoprotein C-terminal domain"/>
    <property type="match status" value="1"/>
</dbReference>
<dbReference type="SUPFAM" id="SSF56425">
    <property type="entry name" value="Succinate dehydrogenase/fumarate reductase flavoprotein, catalytic domain"/>
    <property type="match status" value="1"/>
</dbReference>
<accession>P9WJJ8</accession>
<accession>L0T9X5</accession>
<accession>O06595</accession>
<accession>P65499</accession>
<evidence type="ECO:0000250" key="1">
    <source>
        <dbReference type="UniProtKB" id="P10902"/>
    </source>
</evidence>
<evidence type="ECO:0000305" key="2"/>
<name>NADB_MYCTO</name>
<feature type="chain" id="PRO_0000427817" description="L-aspartate oxidase">
    <location>
        <begin position="1"/>
        <end position="527"/>
    </location>
</feature>
<feature type="active site" description="Proton donor/acceptor" evidence="1">
    <location>
        <position position="281"/>
    </location>
</feature>
<feature type="binding site" evidence="1">
    <location>
        <begin position="17"/>
        <end position="20"/>
    </location>
    <ligand>
        <name>FAD</name>
        <dbReference type="ChEBI" id="CHEBI:57692"/>
    </ligand>
</feature>
<feature type="binding site" evidence="1">
    <location>
        <position position="40"/>
    </location>
    <ligand>
        <name>FAD</name>
        <dbReference type="ChEBI" id="CHEBI:57692"/>
    </ligand>
</feature>
<feature type="binding site" evidence="1">
    <location>
        <begin position="48"/>
        <end position="55"/>
    </location>
    <ligand>
        <name>FAD</name>
        <dbReference type="ChEBI" id="CHEBI:57692"/>
    </ligand>
</feature>
<feature type="binding site" evidence="1">
    <location>
        <position position="212"/>
    </location>
    <ligand>
        <name>FAD</name>
        <dbReference type="ChEBI" id="CHEBI:57692"/>
    </ligand>
</feature>
<feature type="binding site" evidence="1">
    <location>
        <position position="364"/>
    </location>
    <ligand>
        <name>FAD</name>
        <dbReference type="ChEBI" id="CHEBI:57692"/>
    </ligand>
</feature>
<feature type="binding site" evidence="1">
    <location>
        <begin position="380"/>
        <end position="381"/>
    </location>
    <ligand>
        <name>FAD</name>
        <dbReference type="ChEBI" id="CHEBI:57692"/>
    </ligand>
</feature>
<feature type="site" description="Important in orienting the L-aspartate substrate" evidence="1">
    <location>
        <position position="121"/>
    </location>
</feature>
<sequence>MAGPAWRDAADVVVIGTGVAGLAAALAADRAGRSVVVLSKAAQTHVTATHYAQGGIAVVLPDNDDSVDAHVADTLAAGAGLCDPDAVYSIVADGYRAVTDLVGAGARLDESVPGRWALTREGGHSRRRIVHAGGDATGAEVQRALQDAAGMLDIRTGHVALRVLHDGTAVTGLLVVRPDGCGIISAPSVILATGGLGHLYSATTNPAGSTGDGIALGLWAGVAVSDLEFIQFHPTMLFAGRAGGRRPLITEAIRGEGAILVDRQGNSITAGVHPMGDLAPRDVVAAAIDARLKATGDPCVYLDARGIEGFASRFPTVTASCRAAGIDPVRQPIPVVPGAHYSCGGIVTDVYGQTELLGLYAAGEVARTGLHGANRLASNSLLEGLVVGGRAGKAAAAHAAAAGRSRATSSATWPEPISYTALDRGDLQRAMSRDASMYRAAAGLHRLCDSLSGAQVRDVACRRDFEDVALTLVAQSVTAAALARTESRGCHHRAEYPCTVPEQARSIVVRGADDANAVCVQALVAVC</sequence>
<comment type="function">
    <text evidence="1">Catalyzes the oxidation of L-aspartate to iminoaspartate, the first step in the de novo biosynthesis of NAD(+).</text>
</comment>
<comment type="catalytic activity">
    <reaction evidence="1">
        <text>L-aspartate + O2 = iminosuccinate + H2O2</text>
        <dbReference type="Rhea" id="RHEA:25876"/>
        <dbReference type="ChEBI" id="CHEBI:15379"/>
        <dbReference type="ChEBI" id="CHEBI:16240"/>
        <dbReference type="ChEBI" id="CHEBI:29991"/>
        <dbReference type="ChEBI" id="CHEBI:77875"/>
        <dbReference type="EC" id="1.4.3.16"/>
    </reaction>
    <physiologicalReaction direction="left-to-right" evidence="1">
        <dbReference type="Rhea" id="RHEA:25877"/>
    </physiologicalReaction>
</comment>
<comment type="cofactor">
    <cofactor evidence="1">
        <name>FAD</name>
        <dbReference type="ChEBI" id="CHEBI:57692"/>
    </cofactor>
    <text evidence="1">Binds 1 FAD per subunit.</text>
</comment>
<comment type="pathway">
    <text evidence="1">Cofactor biosynthesis; NAD(+) biosynthesis; iminoaspartate from L-aspartate (oxidase route): step 1/1.</text>
</comment>
<comment type="subcellular location">
    <subcellularLocation>
        <location evidence="1">Cytoplasm</location>
    </subcellularLocation>
</comment>
<comment type="similarity">
    <text evidence="2">Belongs to the FAD-dependent oxidoreductase 2 family. NadB subfamily.</text>
</comment>
<organism>
    <name type="scientific">Mycobacterium tuberculosis (strain CDC 1551 / Oshkosh)</name>
    <dbReference type="NCBI Taxonomy" id="83331"/>
    <lineage>
        <taxon>Bacteria</taxon>
        <taxon>Bacillati</taxon>
        <taxon>Actinomycetota</taxon>
        <taxon>Actinomycetes</taxon>
        <taxon>Mycobacteriales</taxon>
        <taxon>Mycobacteriaceae</taxon>
        <taxon>Mycobacterium</taxon>
        <taxon>Mycobacterium tuberculosis complex</taxon>
    </lineage>
</organism>
<reference key="1">
    <citation type="journal article" date="2002" name="J. Bacteriol.">
        <title>Whole-genome comparison of Mycobacterium tuberculosis clinical and laboratory strains.</title>
        <authorList>
            <person name="Fleischmann R.D."/>
            <person name="Alland D."/>
            <person name="Eisen J.A."/>
            <person name="Carpenter L."/>
            <person name="White O."/>
            <person name="Peterson J.D."/>
            <person name="DeBoy R.T."/>
            <person name="Dodson R.J."/>
            <person name="Gwinn M.L."/>
            <person name="Haft D.H."/>
            <person name="Hickey E.K."/>
            <person name="Kolonay J.F."/>
            <person name="Nelson W.C."/>
            <person name="Umayam L.A."/>
            <person name="Ermolaeva M.D."/>
            <person name="Salzberg S.L."/>
            <person name="Delcher A."/>
            <person name="Utterback T.R."/>
            <person name="Weidman J.F."/>
            <person name="Khouri H.M."/>
            <person name="Gill J."/>
            <person name="Mikula A."/>
            <person name="Bishai W."/>
            <person name="Jacobs W.R. Jr."/>
            <person name="Venter J.C."/>
            <person name="Fraser C.M."/>
        </authorList>
    </citation>
    <scope>NUCLEOTIDE SEQUENCE [LARGE SCALE GENOMIC DNA]</scope>
    <source>
        <strain>CDC 1551 / Oshkosh</strain>
    </source>
</reference>
<protein>
    <recommendedName>
        <fullName evidence="1">L-aspartate oxidase</fullName>
        <shortName evidence="1">LASPO</shortName>
        <ecNumber evidence="1">1.4.3.16</ecNumber>
    </recommendedName>
    <alternativeName>
        <fullName>Quinolinate synthase B</fullName>
    </alternativeName>
</protein>
<keyword id="KW-0963">Cytoplasm</keyword>
<keyword id="KW-0274">FAD</keyword>
<keyword id="KW-0285">Flavoprotein</keyword>
<keyword id="KW-0547">Nucleotide-binding</keyword>
<keyword id="KW-0560">Oxidoreductase</keyword>
<keyword id="KW-0662">Pyridine nucleotide biosynthesis</keyword>
<keyword id="KW-1185">Reference proteome</keyword>
<gene>
    <name type="primary">nadB</name>
    <name type="ordered locus">MT1631</name>
</gene>